<evidence type="ECO:0000250" key="1">
    <source>
        <dbReference type="UniProtKB" id="Q56Y74"/>
    </source>
</evidence>
<evidence type="ECO:0000250" key="2">
    <source>
        <dbReference type="UniProtKB" id="Q84WV6"/>
    </source>
</evidence>
<evidence type="ECO:0000255" key="3"/>
<evidence type="ECO:0000255" key="4">
    <source>
        <dbReference type="PROSITE-ProRule" id="PRU00768"/>
    </source>
</evidence>
<evidence type="ECO:0000256" key="5">
    <source>
        <dbReference type="SAM" id="MobiDB-lite"/>
    </source>
</evidence>
<evidence type="ECO:0000269" key="6">
    <source>
    </source>
</evidence>
<evidence type="ECO:0000303" key="7">
    <source>
    </source>
</evidence>
<evidence type="ECO:0000303" key="8">
    <source>
    </source>
</evidence>
<evidence type="ECO:0000303" key="9">
    <source>
    </source>
</evidence>
<evidence type="ECO:0000305" key="10"/>
<evidence type="ECO:0000312" key="11">
    <source>
        <dbReference type="Araport" id="AT4G36270"/>
    </source>
</evidence>
<evidence type="ECO:0000312" key="12">
    <source>
        <dbReference type="EMBL" id="CAA18133.1"/>
    </source>
</evidence>
<evidence type="ECO:0000312" key="13">
    <source>
        <dbReference type="Proteomes" id="UP000006548"/>
    </source>
</evidence>
<feature type="chain" id="PRO_0000434978" description="Protein MICRORCHIDIA 3">
    <location>
        <begin position="1"/>
        <end position="589"/>
    </location>
</feature>
<feature type="region of interest" description="Disordered" evidence="5">
    <location>
        <begin position="1"/>
        <end position="33"/>
    </location>
</feature>
<feature type="coiled-coil region" evidence="3">
    <location>
        <begin position="542"/>
        <end position="589"/>
    </location>
</feature>
<accession>F4JPP0</accession>
<accession>O65518</accession>
<gene>
    <name evidence="9" type="primary">MORC3</name>
    <name evidence="8" type="synonym">CRH2</name>
    <name evidence="11" type="ordered locus">At4g36270</name>
    <name evidence="12" type="ORF">F23E13.160</name>
</gene>
<proteinExistence type="inferred from homology"/>
<dbReference type="EC" id="3.6.-.-"/>
<dbReference type="EMBL" id="AL022141">
    <property type="protein sequence ID" value="CAA18133.1"/>
    <property type="status" value="ALT_SEQ"/>
    <property type="molecule type" value="Genomic_DNA"/>
</dbReference>
<dbReference type="EMBL" id="AL161589">
    <property type="protein sequence ID" value="CAB80298.1"/>
    <property type="status" value="ALT_SEQ"/>
    <property type="molecule type" value="Genomic_DNA"/>
</dbReference>
<dbReference type="EMBL" id="CP002687">
    <property type="protein sequence ID" value="AEE86642.1"/>
    <property type="status" value="ALT_SEQ"/>
    <property type="molecule type" value="Genomic_DNA"/>
</dbReference>
<dbReference type="PIR" id="T04596">
    <property type="entry name" value="T04596"/>
</dbReference>
<dbReference type="RefSeq" id="NP_195350.5">
    <property type="nucleotide sequence ID" value="NM_119795.5"/>
</dbReference>
<dbReference type="SMR" id="F4JPP0"/>
<dbReference type="FunCoup" id="F4JPP0">
    <property type="interactions" value="1735"/>
</dbReference>
<dbReference type="STRING" id="3702.F4JPP0"/>
<dbReference type="PeptideAtlas" id="F4JPP0"/>
<dbReference type="GeneID" id="829784"/>
<dbReference type="KEGG" id="ath:AT4G36270"/>
<dbReference type="Araport" id="AT4G36270"/>
<dbReference type="TAIR" id="AT4G36270"/>
<dbReference type="HOGENOM" id="CLU_011516_4_1_1"/>
<dbReference type="InParanoid" id="F4JPP0"/>
<dbReference type="PRO" id="PR:F4JPP0"/>
<dbReference type="Proteomes" id="UP000006548">
    <property type="component" value="Chromosome 4"/>
</dbReference>
<dbReference type="ExpressionAtlas" id="F4JPP0">
    <property type="expression patterns" value="baseline and differential"/>
</dbReference>
<dbReference type="GO" id="GO:0005634">
    <property type="term" value="C:nucleus"/>
    <property type="evidence" value="ECO:0000250"/>
    <property type="project" value="UniProtKB"/>
</dbReference>
<dbReference type="GO" id="GO:0005524">
    <property type="term" value="F:ATP binding"/>
    <property type="evidence" value="ECO:0007669"/>
    <property type="project" value="UniProtKB-KW"/>
</dbReference>
<dbReference type="GO" id="GO:0016887">
    <property type="term" value="F:ATP hydrolysis activity"/>
    <property type="evidence" value="ECO:0000250"/>
    <property type="project" value="UniProtKB"/>
</dbReference>
<dbReference type="GO" id="GO:0003677">
    <property type="term" value="F:DNA binding"/>
    <property type="evidence" value="ECO:0000250"/>
    <property type="project" value="UniProtKB"/>
</dbReference>
<dbReference type="GO" id="GO:0004519">
    <property type="term" value="F:endonuclease activity"/>
    <property type="evidence" value="ECO:0000250"/>
    <property type="project" value="UniProtKB"/>
</dbReference>
<dbReference type="GO" id="GO:0003723">
    <property type="term" value="F:RNA binding"/>
    <property type="evidence" value="ECO:0000250"/>
    <property type="project" value="UniProtKB"/>
</dbReference>
<dbReference type="GO" id="GO:0006325">
    <property type="term" value="P:chromatin organization"/>
    <property type="evidence" value="ECO:0007669"/>
    <property type="project" value="UniProtKB-KW"/>
</dbReference>
<dbReference type="GO" id="GO:0006281">
    <property type="term" value="P:DNA repair"/>
    <property type="evidence" value="ECO:0007669"/>
    <property type="project" value="UniProtKB-KW"/>
</dbReference>
<dbReference type="GO" id="GO:0031349">
    <property type="term" value="P:positive regulation of defense response"/>
    <property type="evidence" value="ECO:0007669"/>
    <property type="project" value="UniProtKB-ARBA"/>
</dbReference>
<dbReference type="GO" id="GO:0006282">
    <property type="term" value="P:regulation of DNA repair"/>
    <property type="evidence" value="ECO:0000250"/>
    <property type="project" value="UniProtKB"/>
</dbReference>
<dbReference type="GO" id="GO:0060966">
    <property type="term" value="P:regulation of gene silencing by regulatory ncRNA"/>
    <property type="evidence" value="ECO:0000250"/>
    <property type="project" value="UniProtKB"/>
</dbReference>
<dbReference type="GO" id="GO:0031047">
    <property type="term" value="P:regulatory ncRNA-mediated gene silencing"/>
    <property type="evidence" value="ECO:0007669"/>
    <property type="project" value="UniProtKB-KW"/>
</dbReference>
<dbReference type="FunFam" id="3.30.565.10:FF:000075">
    <property type="entry name" value="MORC family CW-type zinc finger protein 4"/>
    <property type="match status" value="1"/>
</dbReference>
<dbReference type="Gene3D" id="3.30.565.10">
    <property type="entry name" value="Histidine kinase-like ATPase, C-terminal domain"/>
    <property type="match status" value="1"/>
</dbReference>
<dbReference type="InterPro" id="IPR036890">
    <property type="entry name" value="HATPase_C_sf"/>
</dbReference>
<dbReference type="InterPro" id="IPR045261">
    <property type="entry name" value="MORC_ATPase"/>
</dbReference>
<dbReference type="InterPro" id="IPR041006">
    <property type="entry name" value="Morc_S5"/>
</dbReference>
<dbReference type="PANTHER" id="PTHR23336:SF50">
    <property type="entry name" value="PROTEIN MICRORCHIDIA 1-RELATED"/>
    <property type="match status" value="1"/>
</dbReference>
<dbReference type="PANTHER" id="PTHR23336">
    <property type="entry name" value="ZINC FINGER CW-TYPE COILED-COIL DOMAIN PROTEIN 3"/>
    <property type="match status" value="1"/>
</dbReference>
<dbReference type="Pfam" id="PF13589">
    <property type="entry name" value="HATPase_c_3"/>
    <property type="match status" value="1"/>
</dbReference>
<dbReference type="Pfam" id="PF17942">
    <property type="entry name" value="Morc6_S5"/>
    <property type="match status" value="1"/>
</dbReference>
<dbReference type="SUPFAM" id="SSF55874">
    <property type="entry name" value="ATPase domain of HSP90 chaperone/DNA topoisomerase II/histidine kinase"/>
    <property type="match status" value="1"/>
</dbReference>
<keyword id="KW-0067">ATP-binding</keyword>
<keyword id="KW-0156">Chromatin regulator</keyword>
<keyword id="KW-0175">Coiled coil</keyword>
<keyword id="KW-0227">DNA damage</keyword>
<keyword id="KW-0234">DNA repair</keyword>
<keyword id="KW-0238">DNA-binding</keyword>
<keyword id="KW-0255">Endonuclease</keyword>
<keyword id="KW-0378">Hydrolase</keyword>
<keyword id="KW-0540">Nuclease</keyword>
<keyword id="KW-0547">Nucleotide-binding</keyword>
<keyword id="KW-0539">Nucleus</keyword>
<keyword id="KW-1185">Reference proteome</keyword>
<keyword id="KW-0694">RNA-binding</keyword>
<keyword id="KW-0943">RNA-mediated gene silencing</keyword>
<organism evidence="13">
    <name type="scientific">Arabidopsis thaliana</name>
    <name type="common">Mouse-ear cress</name>
    <dbReference type="NCBI Taxonomy" id="3702"/>
    <lineage>
        <taxon>Eukaryota</taxon>
        <taxon>Viridiplantae</taxon>
        <taxon>Streptophyta</taxon>
        <taxon>Embryophyta</taxon>
        <taxon>Tracheophyta</taxon>
        <taxon>Spermatophyta</taxon>
        <taxon>Magnoliopsida</taxon>
        <taxon>eudicotyledons</taxon>
        <taxon>Gunneridae</taxon>
        <taxon>Pentapetalae</taxon>
        <taxon>rosids</taxon>
        <taxon>malvids</taxon>
        <taxon>Brassicales</taxon>
        <taxon>Brassicaceae</taxon>
        <taxon>Camelineae</taxon>
        <taxon>Arabidopsis</taxon>
    </lineage>
</organism>
<name>MORC3_ARATH</name>
<reference key="1">
    <citation type="journal article" date="1999" name="Nature">
        <title>Sequence and analysis of chromosome 4 of the plant Arabidopsis thaliana.</title>
        <authorList>
            <person name="Mayer K.F.X."/>
            <person name="Schueller C."/>
            <person name="Wambutt R."/>
            <person name="Murphy G."/>
            <person name="Volckaert G."/>
            <person name="Pohl T."/>
            <person name="Duesterhoeft A."/>
            <person name="Stiekema W."/>
            <person name="Entian K.-D."/>
            <person name="Terryn N."/>
            <person name="Harris B."/>
            <person name="Ansorge W."/>
            <person name="Brandt P."/>
            <person name="Grivell L.A."/>
            <person name="Rieger M."/>
            <person name="Weichselgartner M."/>
            <person name="de Simone V."/>
            <person name="Obermaier B."/>
            <person name="Mache R."/>
            <person name="Mueller M."/>
            <person name="Kreis M."/>
            <person name="Delseny M."/>
            <person name="Puigdomenech P."/>
            <person name="Watson M."/>
            <person name="Schmidtheini T."/>
            <person name="Reichert B."/>
            <person name="Portetelle D."/>
            <person name="Perez-Alonso M."/>
            <person name="Boutry M."/>
            <person name="Bancroft I."/>
            <person name="Vos P."/>
            <person name="Hoheisel J."/>
            <person name="Zimmermann W."/>
            <person name="Wedler H."/>
            <person name="Ridley P."/>
            <person name="Langham S.-A."/>
            <person name="McCullagh B."/>
            <person name="Bilham L."/>
            <person name="Robben J."/>
            <person name="van der Schueren J."/>
            <person name="Grymonprez B."/>
            <person name="Chuang Y.-J."/>
            <person name="Vandenbussche F."/>
            <person name="Braeken M."/>
            <person name="Weltjens I."/>
            <person name="Voet M."/>
            <person name="Bastiaens I."/>
            <person name="Aert R."/>
            <person name="Defoor E."/>
            <person name="Weitzenegger T."/>
            <person name="Bothe G."/>
            <person name="Ramsperger U."/>
            <person name="Hilbert H."/>
            <person name="Braun M."/>
            <person name="Holzer E."/>
            <person name="Brandt A."/>
            <person name="Peters S."/>
            <person name="van Staveren M."/>
            <person name="Dirkse W."/>
            <person name="Mooijman P."/>
            <person name="Klein Lankhorst R."/>
            <person name="Rose M."/>
            <person name="Hauf J."/>
            <person name="Koetter P."/>
            <person name="Berneiser S."/>
            <person name="Hempel S."/>
            <person name="Feldpausch M."/>
            <person name="Lamberth S."/>
            <person name="Van den Daele H."/>
            <person name="De Keyser A."/>
            <person name="Buysshaert C."/>
            <person name="Gielen J."/>
            <person name="Villarroel R."/>
            <person name="De Clercq R."/>
            <person name="van Montagu M."/>
            <person name="Rogers J."/>
            <person name="Cronin A."/>
            <person name="Quail M.A."/>
            <person name="Bray-Allen S."/>
            <person name="Clark L."/>
            <person name="Doggett J."/>
            <person name="Hall S."/>
            <person name="Kay M."/>
            <person name="Lennard N."/>
            <person name="McLay K."/>
            <person name="Mayes R."/>
            <person name="Pettett A."/>
            <person name="Rajandream M.A."/>
            <person name="Lyne M."/>
            <person name="Benes V."/>
            <person name="Rechmann S."/>
            <person name="Borkova D."/>
            <person name="Bloecker H."/>
            <person name="Scharfe M."/>
            <person name="Grimm M."/>
            <person name="Loehnert T.-H."/>
            <person name="Dose S."/>
            <person name="de Haan M."/>
            <person name="Maarse A.C."/>
            <person name="Schaefer M."/>
            <person name="Mueller-Auer S."/>
            <person name="Gabel C."/>
            <person name="Fuchs M."/>
            <person name="Fartmann B."/>
            <person name="Granderath K."/>
            <person name="Dauner D."/>
            <person name="Herzl A."/>
            <person name="Neumann S."/>
            <person name="Argiriou A."/>
            <person name="Vitale D."/>
            <person name="Liguori R."/>
            <person name="Piravandi E."/>
            <person name="Massenet O."/>
            <person name="Quigley F."/>
            <person name="Clabauld G."/>
            <person name="Muendlein A."/>
            <person name="Felber R."/>
            <person name="Schnabl S."/>
            <person name="Hiller R."/>
            <person name="Schmidt W."/>
            <person name="Lecharny A."/>
            <person name="Aubourg S."/>
            <person name="Chefdor F."/>
            <person name="Cooke R."/>
            <person name="Berger C."/>
            <person name="Monfort A."/>
            <person name="Casacuberta E."/>
            <person name="Gibbons T."/>
            <person name="Weber N."/>
            <person name="Vandenbol M."/>
            <person name="Bargues M."/>
            <person name="Terol J."/>
            <person name="Torres A."/>
            <person name="Perez-Perez A."/>
            <person name="Purnelle B."/>
            <person name="Bent E."/>
            <person name="Johnson S."/>
            <person name="Tacon D."/>
            <person name="Jesse T."/>
            <person name="Heijnen L."/>
            <person name="Schwarz S."/>
            <person name="Scholler P."/>
            <person name="Heber S."/>
            <person name="Francs P."/>
            <person name="Bielke C."/>
            <person name="Frishman D."/>
            <person name="Haase D."/>
            <person name="Lemcke K."/>
            <person name="Mewes H.-W."/>
            <person name="Stocker S."/>
            <person name="Zaccaria P."/>
            <person name="Bevan M."/>
            <person name="Wilson R.K."/>
            <person name="de la Bastide M."/>
            <person name="Habermann K."/>
            <person name="Parnell L."/>
            <person name="Dedhia N."/>
            <person name="Gnoj L."/>
            <person name="Schutz K."/>
            <person name="Huang E."/>
            <person name="Spiegel L."/>
            <person name="Sekhon M."/>
            <person name="Murray J."/>
            <person name="Sheet P."/>
            <person name="Cordes M."/>
            <person name="Abu-Threideh J."/>
            <person name="Stoneking T."/>
            <person name="Kalicki J."/>
            <person name="Graves T."/>
            <person name="Harmon G."/>
            <person name="Edwards J."/>
            <person name="Latreille P."/>
            <person name="Courtney L."/>
            <person name="Cloud J."/>
            <person name="Abbott A."/>
            <person name="Scott K."/>
            <person name="Johnson D."/>
            <person name="Minx P."/>
            <person name="Bentley D."/>
            <person name="Fulton B."/>
            <person name="Miller N."/>
            <person name="Greco T."/>
            <person name="Kemp K."/>
            <person name="Kramer J."/>
            <person name="Fulton L."/>
            <person name="Mardis E."/>
            <person name="Dante M."/>
            <person name="Pepin K."/>
            <person name="Hillier L.W."/>
            <person name="Nelson J."/>
            <person name="Spieth J."/>
            <person name="Ryan E."/>
            <person name="Andrews S."/>
            <person name="Geisel C."/>
            <person name="Layman D."/>
            <person name="Du H."/>
            <person name="Ali J."/>
            <person name="Berghoff A."/>
            <person name="Jones K."/>
            <person name="Drone K."/>
            <person name="Cotton M."/>
            <person name="Joshu C."/>
            <person name="Antonoiu B."/>
            <person name="Zidanic M."/>
            <person name="Strong C."/>
            <person name="Sun H."/>
            <person name="Lamar B."/>
            <person name="Yordan C."/>
            <person name="Ma P."/>
            <person name="Zhong J."/>
            <person name="Preston R."/>
            <person name="Vil D."/>
            <person name="Shekher M."/>
            <person name="Matero A."/>
            <person name="Shah R."/>
            <person name="Swaby I.K."/>
            <person name="O'Shaughnessy A."/>
            <person name="Rodriguez M."/>
            <person name="Hoffman J."/>
            <person name="Till S."/>
            <person name="Granat S."/>
            <person name="Shohdy N."/>
            <person name="Hasegawa A."/>
            <person name="Hameed A."/>
            <person name="Lodhi M."/>
            <person name="Johnson A."/>
            <person name="Chen E."/>
            <person name="Marra M.A."/>
            <person name="Martienssen R."/>
            <person name="McCombie W.R."/>
        </authorList>
    </citation>
    <scope>NUCLEOTIDE SEQUENCE [LARGE SCALE GENOMIC DNA]</scope>
    <source>
        <strain>cv. Columbia</strain>
    </source>
</reference>
<reference key="2">
    <citation type="journal article" date="2017" name="Plant J.">
        <title>Araport11: a complete reannotation of the Arabidopsis thaliana reference genome.</title>
        <authorList>
            <person name="Cheng C.Y."/>
            <person name="Krishnakumar V."/>
            <person name="Chan A.P."/>
            <person name="Thibaud-Nissen F."/>
            <person name="Schobel S."/>
            <person name="Town C.D."/>
        </authorList>
    </citation>
    <scope>GENOME REANNOTATION</scope>
    <scope>SEQUENCE REVISION</scope>
    <source>
        <strain>cv. Columbia</strain>
    </source>
</reference>
<reference key="3">
    <citation type="journal article" date="2008" name="Cell Host Microbe">
        <title>CRT1, an Arabidopsis ATPase that interacts with diverse resistance proteins and modulates disease resistance to turnip crinkle virus.</title>
        <authorList>
            <person name="Kang H.-G."/>
            <person name="Kuhl J.C."/>
            <person name="Kachroo P."/>
            <person name="Klessig D.F."/>
        </authorList>
    </citation>
    <scope>DISRUPTION PHENOTYPE</scope>
    <source>
        <strain>cv. Columbia</strain>
    </source>
</reference>
<reference key="4">
    <citation type="journal article" date="2008" name="Plant Signal. Behav.">
        <title>The involvement of the Arabidopsis CRT1 ATPase family in disease resistance protein-mediated signaling.</title>
        <authorList>
            <person name="Kang H.-G."/>
            <person name="Klessig D.F."/>
        </authorList>
    </citation>
    <scope>GENE FAMILY</scope>
    <scope>NOMENCLATURE</scope>
</reference>
<reference key="5">
    <citation type="journal article" date="2014" name="Proc. Natl. Acad. Sci. U.S.A.">
        <title>Transcriptional gene silencing by Arabidopsis microrchidia homologues involves the formation of heteromers.</title>
        <authorList>
            <person name="Moissiard G."/>
            <person name="Bischof S."/>
            <person name="Husmann D."/>
            <person name="Pastor W.A."/>
            <person name="Hale C.J."/>
            <person name="Yen L."/>
            <person name="Stroud H."/>
            <person name="Papikian A."/>
            <person name="Vashisht A.A."/>
            <person name="Wohlschlegel J.A."/>
            <person name="Jacobsen S.E."/>
        </authorList>
    </citation>
    <scope>GENE FAMILY</scope>
    <scope>NOMENCLATURE</scope>
</reference>
<protein>
    <recommendedName>
        <fullName evidence="9">Protein MICRORCHIDIA 3</fullName>
        <shortName evidence="9">AtMORC3</shortName>
        <ecNumber>3.6.-.-</ecNumber>
    </recommendedName>
    <alternativeName>
        <fullName evidence="8">Protein CRT1-homolog 2</fullName>
        <shortName evidence="7">CRT1-h2</shortName>
    </alternativeName>
</protein>
<sequence>MAPESKNAGVSVVVNLDSDSDSDNDDGVGGRGAFRSMASLMDKHQVPSTTADATVAPRENLECRSFWKAGENFVIPTGVTNPAAPAIAELIDNAVDEIQNGATFVKIDKINIVKDNSPALVFQDDGGGMDPDGLRKCMSLGYSSKKSNTTIGQYGNGFKTSTMRLGADDIVFTRSTRGGKSTQSVGLLSYTFLRKTGQDDVVVPMIDIDTSKERPQPIIYGSAEDWAASLEIILKWSPFSTEGELWQQLEDIGTHGTKVIIYNLWLNDEGIYELSFHDDNEDIRLRDESVHDSKRVHHNLLELRSHISYHLRYSLRAYASMLYLKRFNNFKIILRGIPVEQFNIADELRLPETIKYNPHTTKEKAPTEIKVGFIKEAPKLAVCGFNVYHKNRLIRPFWKVTMGGERRGSGVVGVLEANFIEPAHDKQDFERSSLFQRLEARLKKIVSNYWNTHCHVFGYCTYGMPADKSKRIAIPDQPPTVNTFNPLPLPSDEIRVSQGGPIIREISLSNATSSRIAAVDTENNLVGKSAHEISEENIQLFMRCEEYVKKETELEQTVSNLAKELEETKSKCARLALLVDAKRREMQQV</sequence>
<comment type="function">
    <text evidence="2">Exhibits ATPase activity. Binds DNA/RNA in a non-specific manner and exhibits endonuclease activity. Probably involved in DNA repair. Involved in RNA-directed DNA methylation (RdDM) as a component of the RdDM machinery and required for gene silencing. May also be involved in the regulation of chromatin architecture to maintain gene silencing.</text>
</comment>
<comment type="cofactor">
    <cofactor evidence="2">
        <name>Mg(2+)</name>
        <dbReference type="ChEBI" id="CHEBI:18420"/>
    </cofactor>
    <cofactor evidence="2">
        <name>Mn(2+)</name>
        <dbReference type="ChEBI" id="CHEBI:29035"/>
    </cofactor>
</comment>
<comment type="subunit">
    <text evidence="2">Homodimer and heterodimer. Component of an RNA-directed DNA methylation (RdDM) complex.</text>
</comment>
<comment type="subcellular location">
    <subcellularLocation>
        <location evidence="1 4">Nucleus</location>
    </subcellularLocation>
</comment>
<comment type="disruption phenotype">
    <text evidence="6">Likely lethal, leading to seeds abortion.</text>
</comment>
<comment type="similarity">
    <text evidence="10">Belongs to the MORC ATPase protein family.</text>
</comment>
<comment type="sequence caution" evidence="10">
    <conflict type="erroneous gene model prediction">
        <sequence resource="EMBL-CDS" id="AEE86642"/>
    </conflict>
</comment>
<comment type="sequence caution" evidence="10">
    <conflict type="erroneous gene model prediction">
        <sequence resource="EMBL-CDS" id="CAA18133"/>
    </conflict>
</comment>
<comment type="sequence caution" evidence="10">
    <conflict type="erroneous gene model prediction">
        <sequence resource="EMBL-CDS" id="CAB80298"/>
    </conflict>
</comment>